<dbReference type="EC" id="2.3.2.16"/>
<dbReference type="EMBL" id="BX571857">
    <property type="protein sequence ID" value="CAG43963.1"/>
    <property type="molecule type" value="Genomic_DNA"/>
</dbReference>
<dbReference type="RefSeq" id="WP_000413863.1">
    <property type="nucleotide sequence ID" value="NC_002953.3"/>
</dbReference>
<dbReference type="SMR" id="Q6G760"/>
<dbReference type="KEGG" id="sas:SAS2152"/>
<dbReference type="HOGENOM" id="CLU_048411_0_1_9"/>
<dbReference type="GO" id="GO:0005737">
    <property type="term" value="C:cytoplasm"/>
    <property type="evidence" value="ECO:0007669"/>
    <property type="project" value="UniProtKB-SubCell"/>
</dbReference>
<dbReference type="GO" id="GO:0016755">
    <property type="term" value="F:aminoacyltransferase activity"/>
    <property type="evidence" value="ECO:0007669"/>
    <property type="project" value="InterPro"/>
</dbReference>
<dbReference type="GO" id="GO:0071555">
    <property type="term" value="P:cell wall organization"/>
    <property type="evidence" value="ECO:0007669"/>
    <property type="project" value="UniProtKB-KW"/>
</dbReference>
<dbReference type="GO" id="GO:0009252">
    <property type="term" value="P:peptidoglycan biosynthetic process"/>
    <property type="evidence" value="ECO:0007669"/>
    <property type="project" value="UniProtKB-KW"/>
</dbReference>
<dbReference type="GO" id="GO:0008360">
    <property type="term" value="P:regulation of cell shape"/>
    <property type="evidence" value="ECO:0007669"/>
    <property type="project" value="UniProtKB-KW"/>
</dbReference>
<dbReference type="Gene3D" id="1.20.58.90">
    <property type="match status" value="1"/>
</dbReference>
<dbReference type="Gene3D" id="3.40.630.30">
    <property type="match status" value="2"/>
</dbReference>
<dbReference type="InterPro" id="IPR016181">
    <property type="entry name" value="Acyl_CoA_acyltransferase"/>
</dbReference>
<dbReference type="InterPro" id="IPR003447">
    <property type="entry name" value="FEMABX"/>
</dbReference>
<dbReference type="InterPro" id="IPR050644">
    <property type="entry name" value="PG_Glycine_Bridge_Synth"/>
</dbReference>
<dbReference type="PANTHER" id="PTHR36174">
    <property type="entry name" value="LIPID II:GLYCINE GLYCYLTRANSFERASE"/>
    <property type="match status" value="1"/>
</dbReference>
<dbReference type="PANTHER" id="PTHR36174:SF1">
    <property type="entry name" value="LIPID II:GLYCINE GLYCYLTRANSFERASE"/>
    <property type="match status" value="1"/>
</dbReference>
<dbReference type="Pfam" id="PF02388">
    <property type="entry name" value="FemAB"/>
    <property type="match status" value="1"/>
</dbReference>
<dbReference type="SUPFAM" id="SSF55729">
    <property type="entry name" value="Acyl-CoA N-acyltransferases (Nat)"/>
    <property type="match status" value="2"/>
</dbReference>
<dbReference type="PROSITE" id="PS51191">
    <property type="entry name" value="FEMABX"/>
    <property type="match status" value="1"/>
</dbReference>
<proteinExistence type="inferred from homology"/>
<name>FEMX_STAAS</name>
<organism>
    <name type="scientific">Staphylococcus aureus (strain MSSA476)</name>
    <dbReference type="NCBI Taxonomy" id="282459"/>
    <lineage>
        <taxon>Bacteria</taxon>
        <taxon>Bacillati</taxon>
        <taxon>Bacillota</taxon>
        <taxon>Bacilli</taxon>
        <taxon>Bacillales</taxon>
        <taxon>Staphylococcaceae</taxon>
        <taxon>Staphylococcus</taxon>
    </lineage>
</organism>
<accession>Q6G760</accession>
<gene>
    <name type="primary">femX</name>
    <name type="synonym">fmhB</name>
    <name type="ordered locus">SAS2152</name>
</gene>
<evidence type="ECO:0000250" key="1"/>
<evidence type="ECO:0000305" key="2"/>
<comment type="function">
    <text evidence="1">Catalyzes the incorporation of the first glycine of the pentaglycine interpeptide bridge, which is characteristic of the S.aureus peptidoglycan. This glycine is added to the epsilon-amino group of the L-lysine of the membrane-bound lipid II intermediate (GlcNAc-(beta-1,4)-N-acetylmuramic acid(-L-Ala-D-iGln-L-Lys-D-Ala-D-Ala)-pyrophosphoryl-undecaprenol), using glycyl-tRNA(Gly) as donor, in a ribosome-independent mechanism (By similarity).</text>
</comment>
<comment type="catalytic activity">
    <reaction>
        <text>beta-D-GlcNAc-(1-&gt;4)-Mur2Ac(oyl-L-Ala-D-isoglutaminyl-L-Lys-D-Ala-D-Ala)-di-trans,octa-cis-undecaprenyl diphosphate + glycyl-tRNA(Gly) = beta-D-GlcNAc-(1-&gt;4)-Mur2Ac(oyl-L-Ala-D-isoglutaminyl-L-Lys-(N(6)-Gly)-D-Ala-D-Ala)-di-trans,octa-cis-undecaprenyl diphosphate + tRNA(Gly) + H(+)</text>
        <dbReference type="Rhea" id="RHEA:30435"/>
        <dbReference type="Rhea" id="RHEA-COMP:9664"/>
        <dbReference type="Rhea" id="RHEA-COMP:9683"/>
        <dbReference type="ChEBI" id="CHEBI:15378"/>
        <dbReference type="ChEBI" id="CHEBI:62233"/>
        <dbReference type="ChEBI" id="CHEBI:62234"/>
        <dbReference type="ChEBI" id="CHEBI:78442"/>
        <dbReference type="ChEBI" id="CHEBI:78522"/>
        <dbReference type="EC" id="2.3.2.16"/>
    </reaction>
</comment>
<comment type="subunit">
    <text evidence="1">Monomer.</text>
</comment>
<comment type="subcellular location">
    <subcellularLocation>
        <location evidence="2">Cytoplasm</location>
    </subcellularLocation>
</comment>
<comment type="similarity">
    <text evidence="2">Belongs to the FemABX family.</text>
</comment>
<protein>
    <recommendedName>
        <fullName>Lipid II:glycine glycyltransferase</fullName>
        <ecNumber>2.3.2.16</ecNumber>
    </recommendedName>
    <alternativeName>
        <fullName>Factor essential for expression of methicillin resistance X</fullName>
    </alternativeName>
</protein>
<feature type="chain" id="PRO_0000236174" description="Lipid II:glycine glycyltransferase">
    <location>
        <begin position="1"/>
        <end position="421"/>
    </location>
</feature>
<reference key="1">
    <citation type="journal article" date="2004" name="Proc. Natl. Acad. Sci. U.S.A.">
        <title>Complete genomes of two clinical Staphylococcus aureus strains: evidence for the rapid evolution of virulence and drug resistance.</title>
        <authorList>
            <person name="Holden M.T.G."/>
            <person name="Feil E.J."/>
            <person name="Lindsay J.A."/>
            <person name="Peacock S.J."/>
            <person name="Day N.P.J."/>
            <person name="Enright M.C."/>
            <person name="Foster T.J."/>
            <person name="Moore C.E."/>
            <person name="Hurst L."/>
            <person name="Atkin R."/>
            <person name="Barron A."/>
            <person name="Bason N."/>
            <person name="Bentley S.D."/>
            <person name="Chillingworth C."/>
            <person name="Chillingworth T."/>
            <person name="Churcher C."/>
            <person name="Clark L."/>
            <person name="Corton C."/>
            <person name="Cronin A."/>
            <person name="Doggett J."/>
            <person name="Dowd L."/>
            <person name="Feltwell T."/>
            <person name="Hance Z."/>
            <person name="Harris B."/>
            <person name="Hauser H."/>
            <person name="Holroyd S."/>
            <person name="Jagels K."/>
            <person name="James K.D."/>
            <person name="Lennard N."/>
            <person name="Line A."/>
            <person name="Mayes R."/>
            <person name="Moule S."/>
            <person name="Mungall K."/>
            <person name="Ormond D."/>
            <person name="Quail M.A."/>
            <person name="Rabbinowitsch E."/>
            <person name="Rutherford K.M."/>
            <person name="Sanders M."/>
            <person name="Sharp S."/>
            <person name="Simmonds M."/>
            <person name="Stevens K."/>
            <person name="Whitehead S."/>
            <person name="Barrell B.G."/>
            <person name="Spratt B.G."/>
            <person name="Parkhill J."/>
        </authorList>
    </citation>
    <scope>NUCLEOTIDE SEQUENCE [LARGE SCALE GENOMIC DNA]</scope>
    <source>
        <strain>MSSA476</strain>
    </source>
</reference>
<keyword id="KW-0012">Acyltransferase</keyword>
<keyword id="KW-0133">Cell shape</keyword>
<keyword id="KW-0961">Cell wall biogenesis/degradation</keyword>
<keyword id="KW-0963">Cytoplasm</keyword>
<keyword id="KW-0573">Peptidoglycan synthesis</keyword>
<keyword id="KW-0808">Transferase</keyword>
<sequence>MEKMHITNQEHDAFVKSHPNGDLLQLTKWAETKKLTGWYARRIAVGRDGEVQGVAQLLFKKVPKLPYTLCYISRGFVVDYSNKEALNALLDSAKEIAKAEKAYAIKIDPDVEVDKGTDALQNLKALGFKHKGFKEGLSKDYIQPRMTMITPIDKNDDELLNSFERRNRSKVRLALKRGTTVERSDREGLKTFAELMKITGERDGFLTRDISYFENIYDALHEDGDAELFLVKLDPKENIAKVNQELNELHAEIAKWQQKMETSEKQAKKAQNMINDAQNKIAKNEDLKRDLEALEKEHPEGIYLSGALLMFAGSKSYYLYGASSNEFRDFLPNHHMQYTMMKYAREHGATTYDFGGTDNDPDKDSEHYGLWAFKKVWGTYLSEKIGEFDYVLNQPLYQLIEQVKPRLTKAKIKISRKLKRK</sequence>